<protein>
    <recommendedName>
        <fullName evidence="1">Acetyl-coenzyme A synthetase</fullName>
        <shortName evidence="1">AcCoA synthetase</shortName>
        <shortName evidence="1">Acs</shortName>
        <ecNumber evidence="1">6.2.1.1</ecNumber>
    </recommendedName>
    <alternativeName>
        <fullName evidence="1">Acetate--CoA ligase</fullName>
    </alternativeName>
    <alternativeName>
        <fullName evidence="1">Acyl-activating enzyme</fullName>
    </alternativeName>
</protein>
<accession>Q1QEB6</accession>
<reference key="1">
    <citation type="submission" date="2006-03" db="EMBL/GenBank/DDBJ databases">
        <title>Complete sequence of chromosome of Psychrobacter cryohalolentis K5.</title>
        <authorList>
            <consortium name="US DOE Joint Genome Institute"/>
            <person name="Copeland A."/>
            <person name="Lucas S."/>
            <person name="Lapidus A."/>
            <person name="Barry K."/>
            <person name="Detter J.C."/>
            <person name="Glavina T."/>
            <person name="Hammon N."/>
            <person name="Israni S."/>
            <person name="Dalin E."/>
            <person name="Tice H."/>
            <person name="Pitluck S."/>
            <person name="Brettin T."/>
            <person name="Bruce D."/>
            <person name="Han C."/>
            <person name="Tapia R."/>
            <person name="Sims D.R."/>
            <person name="Gilna P."/>
            <person name="Schmutz J."/>
            <person name="Larimer F."/>
            <person name="Land M."/>
            <person name="Hauser L."/>
            <person name="Kyrpides N."/>
            <person name="Kim E."/>
            <person name="Richardson P."/>
        </authorList>
    </citation>
    <scope>NUCLEOTIDE SEQUENCE [LARGE SCALE GENOMIC DNA]</scope>
    <source>
        <strain>ATCC BAA-1226 / DSM 17306 / VKM B-2378 / K5</strain>
    </source>
</reference>
<dbReference type="EC" id="6.2.1.1" evidence="1"/>
<dbReference type="EMBL" id="CP000323">
    <property type="protein sequence ID" value="ABE73987.1"/>
    <property type="molecule type" value="Genomic_DNA"/>
</dbReference>
<dbReference type="RefSeq" id="WP_011512576.1">
    <property type="nucleotide sequence ID" value="NC_007969.1"/>
</dbReference>
<dbReference type="SMR" id="Q1QEB6"/>
<dbReference type="STRING" id="335284.Pcryo_0203"/>
<dbReference type="KEGG" id="pcr:Pcryo_0203"/>
<dbReference type="eggNOG" id="COG0365">
    <property type="taxonomic scope" value="Bacteria"/>
</dbReference>
<dbReference type="HOGENOM" id="CLU_000022_3_6_6"/>
<dbReference type="Proteomes" id="UP000002425">
    <property type="component" value="Chromosome"/>
</dbReference>
<dbReference type="GO" id="GO:0005829">
    <property type="term" value="C:cytosol"/>
    <property type="evidence" value="ECO:0007669"/>
    <property type="project" value="TreeGrafter"/>
</dbReference>
<dbReference type="GO" id="GO:0003987">
    <property type="term" value="F:acetate-CoA ligase activity"/>
    <property type="evidence" value="ECO:0007669"/>
    <property type="project" value="UniProtKB-UniRule"/>
</dbReference>
<dbReference type="GO" id="GO:0016208">
    <property type="term" value="F:AMP binding"/>
    <property type="evidence" value="ECO:0007669"/>
    <property type="project" value="InterPro"/>
</dbReference>
<dbReference type="GO" id="GO:0005524">
    <property type="term" value="F:ATP binding"/>
    <property type="evidence" value="ECO:0007669"/>
    <property type="project" value="UniProtKB-KW"/>
</dbReference>
<dbReference type="GO" id="GO:0046872">
    <property type="term" value="F:metal ion binding"/>
    <property type="evidence" value="ECO:0007669"/>
    <property type="project" value="UniProtKB-KW"/>
</dbReference>
<dbReference type="GO" id="GO:0019427">
    <property type="term" value="P:acetyl-CoA biosynthetic process from acetate"/>
    <property type="evidence" value="ECO:0007669"/>
    <property type="project" value="InterPro"/>
</dbReference>
<dbReference type="CDD" id="cd05966">
    <property type="entry name" value="ACS"/>
    <property type="match status" value="1"/>
</dbReference>
<dbReference type="FunFam" id="3.40.50.12780:FF:000001">
    <property type="entry name" value="Acetyl-coenzyme A synthetase"/>
    <property type="match status" value="1"/>
</dbReference>
<dbReference type="Gene3D" id="3.30.300.30">
    <property type="match status" value="1"/>
</dbReference>
<dbReference type="Gene3D" id="3.40.50.12780">
    <property type="entry name" value="N-terminal domain of ligase-like"/>
    <property type="match status" value="1"/>
</dbReference>
<dbReference type="HAMAP" id="MF_01123">
    <property type="entry name" value="Ac_CoA_synth"/>
    <property type="match status" value="1"/>
</dbReference>
<dbReference type="InterPro" id="IPR011904">
    <property type="entry name" value="Ac_CoA_lig"/>
</dbReference>
<dbReference type="InterPro" id="IPR032387">
    <property type="entry name" value="ACAS_N"/>
</dbReference>
<dbReference type="InterPro" id="IPR025110">
    <property type="entry name" value="AMP-bd_C"/>
</dbReference>
<dbReference type="InterPro" id="IPR045851">
    <property type="entry name" value="AMP-bd_C_sf"/>
</dbReference>
<dbReference type="InterPro" id="IPR020845">
    <property type="entry name" value="AMP-binding_CS"/>
</dbReference>
<dbReference type="InterPro" id="IPR000873">
    <property type="entry name" value="AMP-dep_synth/lig_dom"/>
</dbReference>
<dbReference type="InterPro" id="IPR042099">
    <property type="entry name" value="ANL_N_sf"/>
</dbReference>
<dbReference type="NCBIfam" id="TIGR02188">
    <property type="entry name" value="Ac_CoA_lig_AcsA"/>
    <property type="match status" value="1"/>
</dbReference>
<dbReference type="NCBIfam" id="NF001208">
    <property type="entry name" value="PRK00174.1"/>
    <property type="match status" value="1"/>
</dbReference>
<dbReference type="PANTHER" id="PTHR24095">
    <property type="entry name" value="ACETYL-COENZYME A SYNTHETASE"/>
    <property type="match status" value="1"/>
</dbReference>
<dbReference type="PANTHER" id="PTHR24095:SF14">
    <property type="entry name" value="ACETYL-COENZYME A SYNTHETASE 1"/>
    <property type="match status" value="1"/>
</dbReference>
<dbReference type="Pfam" id="PF16177">
    <property type="entry name" value="ACAS_N"/>
    <property type="match status" value="1"/>
</dbReference>
<dbReference type="Pfam" id="PF00501">
    <property type="entry name" value="AMP-binding"/>
    <property type="match status" value="1"/>
</dbReference>
<dbReference type="Pfam" id="PF13193">
    <property type="entry name" value="AMP-binding_C"/>
    <property type="match status" value="1"/>
</dbReference>
<dbReference type="SUPFAM" id="SSF56801">
    <property type="entry name" value="Acetyl-CoA synthetase-like"/>
    <property type="match status" value="1"/>
</dbReference>
<dbReference type="PROSITE" id="PS00455">
    <property type="entry name" value="AMP_BINDING"/>
    <property type="match status" value="1"/>
</dbReference>
<keyword id="KW-0007">Acetylation</keyword>
<keyword id="KW-0067">ATP-binding</keyword>
<keyword id="KW-0436">Ligase</keyword>
<keyword id="KW-0460">Magnesium</keyword>
<keyword id="KW-0479">Metal-binding</keyword>
<keyword id="KW-0547">Nucleotide-binding</keyword>
<proteinExistence type="inferred from homology"/>
<feature type="chain" id="PRO_1000137273" description="Acetyl-coenzyme A synthetase">
    <location>
        <begin position="1"/>
        <end position="655"/>
    </location>
</feature>
<feature type="binding site" evidence="1">
    <location>
        <begin position="193"/>
        <end position="196"/>
    </location>
    <ligand>
        <name>CoA</name>
        <dbReference type="ChEBI" id="CHEBI:57287"/>
    </ligand>
</feature>
<feature type="binding site" evidence="1">
    <location>
        <position position="313"/>
    </location>
    <ligand>
        <name>CoA</name>
        <dbReference type="ChEBI" id="CHEBI:57287"/>
    </ligand>
</feature>
<feature type="binding site" evidence="1">
    <location>
        <begin position="389"/>
        <end position="391"/>
    </location>
    <ligand>
        <name>ATP</name>
        <dbReference type="ChEBI" id="CHEBI:30616"/>
    </ligand>
</feature>
<feature type="binding site" evidence="1">
    <location>
        <begin position="413"/>
        <end position="418"/>
    </location>
    <ligand>
        <name>ATP</name>
        <dbReference type="ChEBI" id="CHEBI:30616"/>
    </ligand>
</feature>
<feature type="binding site" evidence="1">
    <location>
        <position position="502"/>
    </location>
    <ligand>
        <name>ATP</name>
        <dbReference type="ChEBI" id="CHEBI:30616"/>
    </ligand>
</feature>
<feature type="binding site" evidence="1">
    <location>
        <position position="517"/>
    </location>
    <ligand>
        <name>ATP</name>
        <dbReference type="ChEBI" id="CHEBI:30616"/>
    </ligand>
</feature>
<feature type="binding site" evidence="1">
    <location>
        <position position="525"/>
    </location>
    <ligand>
        <name>CoA</name>
        <dbReference type="ChEBI" id="CHEBI:57287"/>
    </ligand>
</feature>
<feature type="binding site" evidence="1">
    <location>
        <position position="528"/>
    </location>
    <ligand>
        <name>ATP</name>
        <dbReference type="ChEBI" id="CHEBI:30616"/>
    </ligand>
</feature>
<feature type="binding site" evidence="1">
    <location>
        <position position="539"/>
    </location>
    <ligand>
        <name>Mg(2+)</name>
        <dbReference type="ChEBI" id="CHEBI:18420"/>
    </ligand>
</feature>
<feature type="binding site" evidence="1">
    <location>
        <position position="541"/>
    </location>
    <ligand>
        <name>Mg(2+)</name>
        <dbReference type="ChEBI" id="CHEBI:18420"/>
    </ligand>
</feature>
<feature type="binding site" evidence="1">
    <location>
        <position position="586"/>
    </location>
    <ligand>
        <name>CoA</name>
        <dbReference type="ChEBI" id="CHEBI:57287"/>
    </ligand>
</feature>
<feature type="modified residue" description="N6-acetyllysine" evidence="1">
    <location>
        <position position="611"/>
    </location>
</feature>
<sequence length="655" mass="72313">MTQKSFPIAPEFLAAANITAEQYAEQYKQSIASPEATDAFWAERAELIDWIKKPTKISDVSYDLEDFRIKWFEDGELNISVNCLDRHVRNNPYKPAIIWEGDHPSLHKIISFKELHEAVCRLGNAMRKLGVKKGDRVTLYMPMIPEAMVAMLACTRIGAVHSVVFGGFSAESLGNRIIDSQSKLVITADEGIRGNKRTPLKANVDRALDMDGTDSVSNVIVVHRTGNSVPMSGRRDIWYHSLVDGESQHCEPEVMNAEDPLFLLYTSGSTGKPKGVLHTTGGYITYALSTFRDVFDIKEDDVYWCTADVGWVTGHTYATYAPLANGTTTVMFEGVPEYPTWARIGHIIDKHQITVLYTAPTAIRAMMKEGDTFVRESDRSSLRLLGTVGEPINPEAWDWYYHVVGGSKCPVVDTWWQTETGGIMLAPIPGTVAMKPGAAMNPLYGIVPEVIDTDGVALEGAAEGNLVINSSWPGQMRTIYQDHARFLTTYFTEYPGYYFTGDGVQRDEDGHYWITGRVDDVLNVSGHRLGTAEIESSIVAHPATAEAAVVGMPHDIRGMGICAFVILKSSETATESLKSELNRHVRSEIGPIANLDAIYMVNVLPKTRSGKIMRRILRSLAAGQYVGLGDLSTLADSSVINELVEVVKTERAKSH</sequence>
<organism>
    <name type="scientific">Psychrobacter cryohalolentis (strain ATCC BAA-1226 / DSM 17306 / VKM B-2378 / K5)</name>
    <dbReference type="NCBI Taxonomy" id="335284"/>
    <lineage>
        <taxon>Bacteria</taxon>
        <taxon>Pseudomonadati</taxon>
        <taxon>Pseudomonadota</taxon>
        <taxon>Gammaproteobacteria</taxon>
        <taxon>Moraxellales</taxon>
        <taxon>Moraxellaceae</taxon>
        <taxon>Psychrobacter</taxon>
    </lineage>
</organism>
<comment type="function">
    <text evidence="1">Catalyzes the conversion of acetate into acetyl-CoA (AcCoA), an essential intermediate at the junction of anabolic and catabolic pathways. AcsA undergoes a two-step reaction. In the first half reaction, AcsA combines acetate with ATP to form acetyl-adenylate (AcAMP) intermediate. In the second half reaction, it can then transfer the acetyl group from AcAMP to the sulfhydryl group of CoA, forming the product AcCoA.</text>
</comment>
<comment type="catalytic activity">
    <reaction evidence="1">
        <text>acetate + ATP + CoA = acetyl-CoA + AMP + diphosphate</text>
        <dbReference type="Rhea" id="RHEA:23176"/>
        <dbReference type="ChEBI" id="CHEBI:30089"/>
        <dbReference type="ChEBI" id="CHEBI:30616"/>
        <dbReference type="ChEBI" id="CHEBI:33019"/>
        <dbReference type="ChEBI" id="CHEBI:57287"/>
        <dbReference type="ChEBI" id="CHEBI:57288"/>
        <dbReference type="ChEBI" id="CHEBI:456215"/>
        <dbReference type="EC" id="6.2.1.1"/>
    </reaction>
</comment>
<comment type="cofactor">
    <cofactor evidence="1">
        <name>Mg(2+)</name>
        <dbReference type="ChEBI" id="CHEBI:18420"/>
    </cofactor>
</comment>
<comment type="PTM">
    <text evidence="1">Acetylated. Deacetylation by the SIR2-homolog deacetylase activates the enzyme.</text>
</comment>
<comment type="similarity">
    <text evidence="1">Belongs to the ATP-dependent AMP-binding enzyme family.</text>
</comment>
<evidence type="ECO:0000255" key="1">
    <source>
        <dbReference type="HAMAP-Rule" id="MF_01123"/>
    </source>
</evidence>
<gene>
    <name evidence="1" type="primary">acsA</name>
    <name type="ordered locus">Pcryo_0203</name>
</gene>
<name>ACSA_PSYCK</name>